<organism>
    <name type="scientific">Staphylococcus epidermidis (strain ATCC 12228 / FDA PCI 1200)</name>
    <dbReference type="NCBI Taxonomy" id="176280"/>
    <lineage>
        <taxon>Bacteria</taxon>
        <taxon>Bacillati</taxon>
        <taxon>Bacillota</taxon>
        <taxon>Bacilli</taxon>
        <taxon>Bacillales</taxon>
        <taxon>Staphylococcaceae</taxon>
        <taxon>Staphylococcus</taxon>
    </lineage>
</organism>
<comment type="function">
    <text evidence="1">Member of the two-component regulatory system SaeR/SaeS. Probably functions as a transcriptional regulator via a specific DNA-binding domain, recognizing motifs near the promoter sequences of target genes (By similarity).</text>
</comment>
<comment type="subcellular location">
    <subcellularLocation>
        <location evidence="1">Cytoplasm</location>
    </subcellularLocation>
</comment>
<comment type="PTM">
    <text evidence="1">Phosphorylated by SaeS.</text>
</comment>
<proteinExistence type="evidence at protein level"/>
<keyword id="KW-0002">3D-structure</keyword>
<keyword id="KW-0963">Cytoplasm</keyword>
<keyword id="KW-0238">DNA-binding</keyword>
<keyword id="KW-0597">Phosphoprotein</keyword>
<keyword id="KW-0716">Sensory transduction</keyword>
<keyword id="KW-0804">Transcription</keyword>
<keyword id="KW-0805">Transcription regulation</keyword>
<keyword id="KW-0902">Two-component regulatory system</keyword>
<gene>
    <name type="primary">saeR</name>
    <name type="ordered locus">SE_0479</name>
</gene>
<accession>Q8CQ17</accession>
<name>SAER_STAES</name>
<feature type="chain" id="PRO_0000295927" description="Response regulator SaeR">
    <location>
        <begin position="1"/>
        <end position="229"/>
    </location>
</feature>
<feature type="domain" description="Response regulatory" evidence="2">
    <location>
        <begin position="3"/>
        <end position="116"/>
    </location>
</feature>
<feature type="DNA-binding region" description="OmpR/PhoB-type" evidence="3">
    <location>
        <begin position="128"/>
        <end position="227"/>
    </location>
</feature>
<feature type="modified residue" description="4-aspartylphosphate" evidence="2">
    <location>
        <position position="51"/>
    </location>
</feature>
<feature type="strand" evidence="4">
    <location>
        <begin position="130"/>
        <end position="133"/>
    </location>
</feature>
<feature type="strand" evidence="4">
    <location>
        <begin position="136"/>
        <end position="139"/>
    </location>
</feature>
<feature type="turn" evidence="4">
    <location>
        <begin position="140"/>
        <end position="143"/>
    </location>
</feature>
<feature type="strand" evidence="4">
    <location>
        <begin position="144"/>
        <end position="147"/>
    </location>
</feature>
<feature type="strand" evidence="4">
    <location>
        <begin position="150"/>
        <end position="152"/>
    </location>
</feature>
<feature type="helix" evidence="4">
    <location>
        <begin position="156"/>
        <end position="166"/>
    </location>
</feature>
<feature type="turn" evidence="4">
    <location>
        <begin position="167"/>
        <end position="170"/>
    </location>
</feature>
<feature type="helix" evidence="4">
    <location>
        <begin position="175"/>
        <end position="182"/>
    </location>
</feature>
<feature type="strand" evidence="4">
    <location>
        <begin position="183"/>
        <end position="186"/>
    </location>
</feature>
<feature type="helix" evidence="4">
    <location>
        <begin position="193"/>
        <end position="207"/>
    </location>
</feature>
<feature type="strand" evidence="4">
    <location>
        <begin position="212"/>
        <end position="218"/>
    </location>
</feature>
<feature type="turn" evidence="4">
    <location>
        <begin position="219"/>
        <end position="221"/>
    </location>
</feature>
<feature type="strand" evidence="4">
    <location>
        <begin position="222"/>
        <end position="227"/>
    </location>
</feature>
<dbReference type="EMBL" id="AE015929">
    <property type="protein sequence ID" value="AAO04076.1"/>
    <property type="molecule type" value="Genomic_DNA"/>
</dbReference>
<dbReference type="RefSeq" id="NP_764034.1">
    <property type="nucleotide sequence ID" value="NC_004461.1"/>
</dbReference>
<dbReference type="RefSeq" id="WP_001830352.1">
    <property type="nucleotide sequence ID" value="NZ_WBME01000018.1"/>
</dbReference>
<dbReference type="PDB" id="4IXA">
    <property type="method" value="X-ray"/>
    <property type="resolution" value="2.15 A"/>
    <property type="chains" value="A/B=128-229"/>
</dbReference>
<dbReference type="PDBsum" id="4IXA"/>
<dbReference type="SMR" id="Q8CQ17"/>
<dbReference type="GeneID" id="50019368"/>
<dbReference type="KEGG" id="sep:SE_0479"/>
<dbReference type="PATRIC" id="fig|176280.10.peg.451"/>
<dbReference type="eggNOG" id="COG0745">
    <property type="taxonomic scope" value="Bacteria"/>
</dbReference>
<dbReference type="HOGENOM" id="CLU_000445_30_4_9"/>
<dbReference type="OrthoDB" id="9790442at2"/>
<dbReference type="EvolutionaryTrace" id="Q8CQ17"/>
<dbReference type="Proteomes" id="UP000001411">
    <property type="component" value="Chromosome"/>
</dbReference>
<dbReference type="GO" id="GO:0005829">
    <property type="term" value="C:cytosol"/>
    <property type="evidence" value="ECO:0007669"/>
    <property type="project" value="TreeGrafter"/>
</dbReference>
<dbReference type="GO" id="GO:0032993">
    <property type="term" value="C:protein-DNA complex"/>
    <property type="evidence" value="ECO:0007669"/>
    <property type="project" value="TreeGrafter"/>
</dbReference>
<dbReference type="GO" id="GO:0000156">
    <property type="term" value="F:phosphorelay response regulator activity"/>
    <property type="evidence" value="ECO:0007669"/>
    <property type="project" value="TreeGrafter"/>
</dbReference>
<dbReference type="GO" id="GO:0000976">
    <property type="term" value="F:transcription cis-regulatory region binding"/>
    <property type="evidence" value="ECO:0007669"/>
    <property type="project" value="TreeGrafter"/>
</dbReference>
<dbReference type="GO" id="GO:0006355">
    <property type="term" value="P:regulation of DNA-templated transcription"/>
    <property type="evidence" value="ECO:0007669"/>
    <property type="project" value="InterPro"/>
</dbReference>
<dbReference type="CDD" id="cd17574">
    <property type="entry name" value="REC_OmpR"/>
    <property type="match status" value="1"/>
</dbReference>
<dbReference type="CDD" id="cd00383">
    <property type="entry name" value="trans_reg_C"/>
    <property type="match status" value="1"/>
</dbReference>
<dbReference type="FunFam" id="1.10.10.10:FF:000018">
    <property type="entry name" value="DNA-binding response regulator ResD"/>
    <property type="match status" value="1"/>
</dbReference>
<dbReference type="Gene3D" id="3.40.50.2300">
    <property type="match status" value="1"/>
</dbReference>
<dbReference type="Gene3D" id="1.10.10.10">
    <property type="entry name" value="Winged helix-like DNA-binding domain superfamily/Winged helix DNA-binding domain"/>
    <property type="match status" value="1"/>
</dbReference>
<dbReference type="InterPro" id="IPR011006">
    <property type="entry name" value="CheY-like_superfamily"/>
</dbReference>
<dbReference type="InterPro" id="IPR001867">
    <property type="entry name" value="OmpR/PhoB-type_DNA-bd"/>
</dbReference>
<dbReference type="InterPro" id="IPR001789">
    <property type="entry name" value="Sig_transdc_resp-reg_receiver"/>
</dbReference>
<dbReference type="InterPro" id="IPR039420">
    <property type="entry name" value="WalR-like"/>
</dbReference>
<dbReference type="InterPro" id="IPR036388">
    <property type="entry name" value="WH-like_DNA-bd_sf"/>
</dbReference>
<dbReference type="PANTHER" id="PTHR48111">
    <property type="entry name" value="REGULATOR OF RPOS"/>
    <property type="match status" value="1"/>
</dbReference>
<dbReference type="PANTHER" id="PTHR48111:SF2">
    <property type="entry name" value="RESPONSE REGULATOR SAER"/>
    <property type="match status" value="1"/>
</dbReference>
<dbReference type="Pfam" id="PF00072">
    <property type="entry name" value="Response_reg"/>
    <property type="match status" value="1"/>
</dbReference>
<dbReference type="Pfam" id="PF00486">
    <property type="entry name" value="Trans_reg_C"/>
    <property type="match status" value="1"/>
</dbReference>
<dbReference type="SMART" id="SM00448">
    <property type="entry name" value="REC"/>
    <property type="match status" value="1"/>
</dbReference>
<dbReference type="SMART" id="SM00862">
    <property type="entry name" value="Trans_reg_C"/>
    <property type="match status" value="1"/>
</dbReference>
<dbReference type="SUPFAM" id="SSF52172">
    <property type="entry name" value="CheY-like"/>
    <property type="match status" value="1"/>
</dbReference>
<dbReference type="PROSITE" id="PS51755">
    <property type="entry name" value="OMPR_PHOB"/>
    <property type="match status" value="1"/>
</dbReference>
<dbReference type="PROSITE" id="PS50110">
    <property type="entry name" value="RESPONSE_REGULATORY"/>
    <property type="match status" value="1"/>
</dbReference>
<sequence length="229" mass="26833">MTHLLIVDDEKDIVDICQTYFEYEGYQVTTTTCGKEALKLLSSDIDIMILDIMMPEVSGYDIVKKMKDMQLDIPFIYLTAKTQEHDTIYALTLGADDYIKKPFSPRELVLRTNNLLARMSKSNHSNKIEQLEFDGLVLKNLSKTLTINNIEIPMRIKEFELLWYLASREGEVISKSELLEKVWGYDYYEDANTVNVHIHRIREKLEKHDFLPYTITTVWGLGYKFERSR</sequence>
<reference key="1">
    <citation type="journal article" date="2003" name="Mol. Microbiol.">
        <title>Genome-based analysis of virulence genes in a non-biofilm-forming Staphylococcus epidermidis strain (ATCC 12228).</title>
        <authorList>
            <person name="Zhang Y.-Q."/>
            <person name="Ren S.-X."/>
            <person name="Li H.-L."/>
            <person name="Wang Y.-X."/>
            <person name="Fu G."/>
            <person name="Yang J."/>
            <person name="Qin Z.-Q."/>
            <person name="Miao Y.-G."/>
            <person name="Wang W.-Y."/>
            <person name="Chen R.-S."/>
            <person name="Shen Y."/>
            <person name="Chen Z."/>
            <person name="Yuan Z.-H."/>
            <person name="Zhao G.-P."/>
            <person name="Qu D."/>
            <person name="Danchin A."/>
            <person name="Wen Y.-M."/>
        </authorList>
    </citation>
    <scope>NUCLEOTIDE SEQUENCE [LARGE SCALE GENOMIC DNA]</scope>
    <source>
        <strain>ATCC 12228 / FDA PCI 1200</strain>
    </source>
</reference>
<protein>
    <recommendedName>
        <fullName>Response regulator SaeR</fullName>
    </recommendedName>
</protein>
<evidence type="ECO:0000250" key="1"/>
<evidence type="ECO:0000255" key="2">
    <source>
        <dbReference type="PROSITE-ProRule" id="PRU00169"/>
    </source>
</evidence>
<evidence type="ECO:0000255" key="3">
    <source>
        <dbReference type="PROSITE-ProRule" id="PRU01091"/>
    </source>
</evidence>
<evidence type="ECO:0007829" key="4">
    <source>
        <dbReference type="PDB" id="4IXA"/>
    </source>
</evidence>